<protein>
    <recommendedName>
        <fullName evidence="1">Aspartate--tRNA ligase</fullName>
        <ecNumber evidence="1">6.1.1.12</ecNumber>
    </recommendedName>
    <alternativeName>
        <fullName evidence="1">Aspartyl-tRNA synthetase</fullName>
        <shortName evidence="1">AspRS</shortName>
    </alternativeName>
</protein>
<feature type="chain" id="PRO_1000198984" description="Aspartate--tRNA ligase">
    <location>
        <begin position="1"/>
        <end position="590"/>
    </location>
</feature>
<feature type="region of interest" description="Aspartate" evidence="1">
    <location>
        <begin position="195"/>
        <end position="198"/>
    </location>
</feature>
<feature type="binding site" evidence="1">
    <location>
        <position position="171"/>
    </location>
    <ligand>
        <name>L-aspartate</name>
        <dbReference type="ChEBI" id="CHEBI:29991"/>
    </ligand>
</feature>
<feature type="binding site" evidence="1">
    <location>
        <begin position="217"/>
        <end position="219"/>
    </location>
    <ligand>
        <name>ATP</name>
        <dbReference type="ChEBI" id="CHEBI:30616"/>
    </ligand>
</feature>
<feature type="binding site" evidence="1">
    <location>
        <position position="217"/>
    </location>
    <ligand>
        <name>L-aspartate</name>
        <dbReference type="ChEBI" id="CHEBI:29991"/>
    </ligand>
</feature>
<feature type="binding site" evidence="1">
    <location>
        <position position="226"/>
    </location>
    <ligand>
        <name>ATP</name>
        <dbReference type="ChEBI" id="CHEBI:30616"/>
    </ligand>
</feature>
<feature type="binding site" evidence="1">
    <location>
        <position position="448"/>
    </location>
    <ligand>
        <name>L-aspartate</name>
        <dbReference type="ChEBI" id="CHEBI:29991"/>
    </ligand>
</feature>
<feature type="binding site" evidence="1">
    <location>
        <position position="482"/>
    </location>
    <ligand>
        <name>ATP</name>
        <dbReference type="ChEBI" id="CHEBI:30616"/>
    </ligand>
</feature>
<feature type="binding site" evidence="1">
    <location>
        <position position="489"/>
    </location>
    <ligand>
        <name>L-aspartate</name>
        <dbReference type="ChEBI" id="CHEBI:29991"/>
    </ligand>
</feature>
<feature type="binding site" evidence="1">
    <location>
        <begin position="534"/>
        <end position="537"/>
    </location>
    <ligand>
        <name>ATP</name>
        <dbReference type="ChEBI" id="CHEBI:30616"/>
    </ligand>
</feature>
<comment type="function">
    <text evidence="1">Catalyzes the attachment of L-aspartate to tRNA(Asp) in a two-step reaction: L-aspartate is first activated by ATP to form Asp-AMP and then transferred to the acceptor end of tRNA(Asp).</text>
</comment>
<comment type="catalytic activity">
    <reaction evidence="1">
        <text>tRNA(Asp) + L-aspartate + ATP = L-aspartyl-tRNA(Asp) + AMP + diphosphate</text>
        <dbReference type="Rhea" id="RHEA:19649"/>
        <dbReference type="Rhea" id="RHEA-COMP:9660"/>
        <dbReference type="Rhea" id="RHEA-COMP:9678"/>
        <dbReference type="ChEBI" id="CHEBI:29991"/>
        <dbReference type="ChEBI" id="CHEBI:30616"/>
        <dbReference type="ChEBI" id="CHEBI:33019"/>
        <dbReference type="ChEBI" id="CHEBI:78442"/>
        <dbReference type="ChEBI" id="CHEBI:78516"/>
        <dbReference type="ChEBI" id="CHEBI:456215"/>
        <dbReference type="EC" id="6.1.1.12"/>
    </reaction>
</comment>
<comment type="subunit">
    <text evidence="1">Homodimer.</text>
</comment>
<comment type="subcellular location">
    <subcellularLocation>
        <location evidence="1">Cytoplasm</location>
    </subcellularLocation>
</comment>
<comment type="similarity">
    <text evidence="1">Belongs to the class-II aminoacyl-tRNA synthetase family. Type 1 subfamily.</text>
</comment>
<proteinExistence type="inferred from homology"/>
<name>SYD_ECO27</name>
<dbReference type="EC" id="6.1.1.12" evidence="1"/>
<dbReference type="EMBL" id="FM180568">
    <property type="protein sequence ID" value="CAS09539.1"/>
    <property type="molecule type" value="Genomic_DNA"/>
</dbReference>
<dbReference type="RefSeq" id="WP_001258697.1">
    <property type="nucleotide sequence ID" value="NC_011601.1"/>
</dbReference>
<dbReference type="SMR" id="B7USP3"/>
<dbReference type="KEGG" id="ecg:E2348C_1991"/>
<dbReference type="HOGENOM" id="CLU_014330_3_2_6"/>
<dbReference type="Proteomes" id="UP000008205">
    <property type="component" value="Chromosome"/>
</dbReference>
<dbReference type="GO" id="GO:0005737">
    <property type="term" value="C:cytoplasm"/>
    <property type="evidence" value="ECO:0007669"/>
    <property type="project" value="UniProtKB-SubCell"/>
</dbReference>
<dbReference type="GO" id="GO:0004815">
    <property type="term" value="F:aspartate-tRNA ligase activity"/>
    <property type="evidence" value="ECO:0007669"/>
    <property type="project" value="UniProtKB-UniRule"/>
</dbReference>
<dbReference type="GO" id="GO:0005524">
    <property type="term" value="F:ATP binding"/>
    <property type="evidence" value="ECO:0007669"/>
    <property type="project" value="UniProtKB-UniRule"/>
</dbReference>
<dbReference type="GO" id="GO:0003676">
    <property type="term" value="F:nucleic acid binding"/>
    <property type="evidence" value="ECO:0007669"/>
    <property type="project" value="InterPro"/>
</dbReference>
<dbReference type="GO" id="GO:0006422">
    <property type="term" value="P:aspartyl-tRNA aminoacylation"/>
    <property type="evidence" value="ECO:0007669"/>
    <property type="project" value="UniProtKB-UniRule"/>
</dbReference>
<dbReference type="CDD" id="cd00777">
    <property type="entry name" value="AspRS_core"/>
    <property type="match status" value="1"/>
</dbReference>
<dbReference type="CDD" id="cd04317">
    <property type="entry name" value="EcAspRS_like_N"/>
    <property type="match status" value="1"/>
</dbReference>
<dbReference type="FunFam" id="2.40.50.140:FF:000080">
    <property type="entry name" value="Aspartate--tRNA ligase"/>
    <property type="match status" value="1"/>
</dbReference>
<dbReference type="FunFam" id="3.30.1360.30:FF:000001">
    <property type="entry name" value="Aspartate--tRNA ligase"/>
    <property type="match status" value="1"/>
</dbReference>
<dbReference type="Gene3D" id="3.30.930.10">
    <property type="entry name" value="Bira Bifunctional Protein, Domain 2"/>
    <property type="match status" value="1"/>
</dbReference>
<dbReference type="Gene3D" id="3.30.1360.30">
    <property type="entry name" value="GAD-like domain"/>
    <property type="match status" value="1"/>
</dbReference>
<dbReference type="Gene3D" id="2.40.50.140">
    <property type="entry name" value="Nucleic acid-binding proteins"/>
    <property type="match status" value="1"/>
</dbReference>
<dbReference type="HAMAP" id="MF_00044">
    <property type="entry name" value="Asp_tRNA_synth_type1"/>
    <property type="match status" value="1"/>
</dbReference>
<dbReference type="InterPro" id="IPR004364">
    <property type="entry name" value="Aa-tRNA-synt_II"/>
</dbReference>
<dbReference type="InterPro" id="IPR006195">
    <property type="entry name" value="aa-tRNA-synth_II"/>
</dbReference>
<dbReference type="InterPro" id="IPR045864">
    <property type="entry name" value="aa-tRNA-synth_II/BPL/LPL"/>
</dbReference>
<dbReference type="InterPro" id="IPR004524">
    <property type="entry name" value="Asp-tRNA-ligase_1"/>
</dbReference>
<dbReference type="InterPro" id="IPR047089">
    <property type="entry name" value="Asp-tRNA-ligase_1_N"/>
</dbReference>
<dbReference type="InterPro" id="IPR002312">
    <property type="entry name" value="Asp/Asn-tRNA-synth_IIb"/>
</dbReference>
<dbReference type="InterPro" id="IPR047090">
    <property type="entry name" value="AspRS_core"/>
</dbReference>
<dbReference type="InterPro" id="IPR004115">
    <property type="entry name" value="GAD-like_sf"/>
</dbReference>
<dbReference type="InterPro" id="IPR029351">
    <property type="entry name" value="GAD_dom"/>
</dbReference>
<dbReference type="InterPro" id="IPR012340">
    <property type="entry name" value="NA-bd_OB-fold"/>
</dbReference>
<dbReference type="InterPro" id="IPR004365">
    <property type="entry name" value="NA-bd_OB_tRNA"/>
</dbReference>
<dbReference type="NCBIfam" id="TIGR00459">
    <property type="entry name" value="aspS_bact"/>
    <property type="match status" value="1"/>
</dbReference>
<dbReference type="NCBIfam" id="NF001750">
    <property type="entry name" value="PRK00476.1"/>
    <property type="match status" value="1"/>
</dbReference>
<dbReference type="PANTHER" id="PTHR22594:SF5">
    <property type="entry name" value="ASPARTATE--TRNA LIGASE, MITOCHONDRIAL"/>
    <property type="match status" value="1"/>
</dbReference>
<dbReference type="PANTHER" id="PTHR22594">
    <property type="entry name" value="ASPARTYL/LYSYL-TRNA SYNTHETASE"/>
    <property type="match status" value="1"/>
</dbReference>
<dbReference type="Pfam" id="PF02938">
    <property type="entry name" value="GAD"/>
    <property type="match status" value="1"/>
</dbReference>
<dbReference type="Pfam" id="PF00152">
    <property type="entry name" value="tRNA-synt_2"/>
    <property type="match status" value="1"/>
</dbReference>
<dbReference type="Pfam" id="PF01336">
    <property type="entry name" value="tRNA_anti-codon"/>
    <property type="match status" value="1"/>
</dbReference>
<dbReference type="PRINTS" id="PR01042">
    <property type="entry name" value="TRNASYNTHASP"/>
</dbReference>
<dbReference type="SUPFAM" id="SSF55681">
    <property type="entry name" value="Class II aaRS and biotin synthetases"/>
    <property type="match status" value="1"/>
</dbReference>
<dbReference type="SUPFAM" id="SSF55261">
    <property type="entry name" value="GAD domain-like"/>
    <property type="match status" value="1"/>
</dbReference>
<dbReference type="SUPFAM" id="SSF50249">
    <property type="entry name" value="Nucleic acid-binding proteins"/>
    <property type="match status" value="1"/>
</dbReference>
<dbReference type="PROSITE" id="PS50862">
    <property type="entry name" value="AA_TRNA_LIGASE_II"/>
    <property type="match status" value="1"/>
</dbReference>
<keyword id="KW-0030">Aminoacyl-tRNA synthetase</keyword>
<keyword id="KW-0067">ATP-binding</keyword>
<keyword id="KW-0963">Cytoplasm</keyword>
<keyword id="KW-0436">Ligase</keyword>
<keyword id="KW-0547">Nucleotide-binding</keyword>
<keyword id="KW-0648">Protein biosynthesis</keyword>
<keyword id="KW-1185">Reference proteome</keyword>
<evidence type="ECO:0000255" key="1">
    <source>
        <dbReference type="HAMAP-Rule" id="MF_00044"/>
    </source>
</evidence>
<reference key="1">
    <citation type="journal article" date="2009" name="J. Bacteriol.">
        <title>Complete genome sequence and comparative genome analysis of enteropathogenic Escherichia coli O127:H6 strain E2348/69.</title>
        <authorList>
            <person name="Iguchi A."/>
            <person name="Thomson N.R."/>
            <person name="Ogura Y."/>
            <person name="Saunders D."/>
            <person name="Ooka T."/>
            <person name="Henderson I.R."/>
            <person name="Harris D."/>
            <person name="Asadulghani M."/>
            <person name="Kurokawa K."/>
            <person name="Dean P."/>
            <person name="Kenny B."/>
            <person name="Quail M.A."/>
            <person name="Thurston S."/>
            <person name="Dougan G."/>
            <person name="Hayashi T."/>
            <person name="Parkhill J."/>
            <person name="Frankel G."/>
        </authorList>
    </citation>
    <scope>NUCLEOTIDE SEQUENCE [LARGE SCALE GENOMIC DNA]</scope>
    <source>
        <strain>E2348/69 / EPEC</strain>
    </source>
</reference>
<gene>
    <name evidence="1" type="primary">aspS</name>
    <name type="ordered locus">E2348C_1991</name>
</gene>
<organism>
    <name type="scientific">Escherichia coli O127:H6 (strain E2348/69 / EPEC)</name>
    <dbReference type="NCBI Taxonomy" id="574521"/>
    <lineage>
        <taxon>Bacteria</taxon>
        <taxon>Pseudomonadati</taxon>
        <taxon>Pseudomonadota</taxon>
        <taxon>Gammaproteobacteria</taxon>
        <taxon>Enterobacterales</taxon>
        <taxon>Enterobacteriaceae</taxon>
        <taxon>Escherichia</taxon>
    </lineage>
</organism>
<sequence length="590" mass="65869">MRTEYCGQLRLSHVGQQVTLCGWVNRRRDLGSLLFIDMRDREGIVQVFFDPDRADALKLASELRNEFCIQVTGTVRARDEKNINRDMATGEIEVLASSLTIINRADVLPLDSNHVNTEEARLKYRYLDLRRPEMAQRLKTRAKITSLVRRFMDDHGFLDIETPMLTKATPEGARDYLVPSRVHKGKFYALPQSPQLFKQLLMMSGFDRYYQIVKCFRDEDLRADRQPEFTQIDVETSFMTAPQVREVMEALVRHLWLEVKGVDLGDFPVMTFAEAERRYGSDKPDLRNPMELTDVADLLKSVEFAVFAGPANDPKGRVAALRVPGGASLTRKQIDEYGNFVKIYGAKGLAYIKVNERAKGLEGINSPVAKFLNAEIIEAILERTGAQDGDMIFFGADNKKIVADAMGALRLKVGKDLGLTDESKWAPLWVIDFPMFEDDGEGGLTAMHHPFTSPKDMTAAELKAAPENAVANAYDMVINGYEVGGGSVRIHNGDMQQTVFGILGINEEEQREKFGFLLDALKYGTPPHAGLAFGLDRLTMLLTGTDNIRDVIAFPKTTAAACLMTEAPSFANPTALAELSIQVVKKAENN</sequence>
<accession>B7USP3</accession>